<evidence type="ECO:0000255" key="1">
    <source>
        <dbReference type="HAMAP-Rule" id="MF_00438"/>
    </source>
</evidence>
<protein>
    <recommendedName>
        <fullName evidence="1">Photosystem II reaction center protein M</fullName>
        <shortName evidence="1">PSII-M</shortName>
    </recommendedName>
</protein>
<name>PSBM_LEMMI</name>
<dbReference type="EMBL" id="DQ400350">
    <property type="protein sequence ID" value="ABD48489.1"/>
    <property type="molecule type" value="Genomic_DNA"/>
</dbReference>
<dbReference type="RefSeq" id="YP_001595502.1">
    <property type="nucleotide sequence ID" value="NC_010109.1"/>
</dbReference>
<dbReference type="SMR" id="A9L990"/>
<dbReference type="GeneID" id="5787597"/>
<dbReference type="GO" id="GO:0009535">
    <property type="term" value="C:chloroplast thylakoid membrane"/>
    <property type="evidence" value="ECO:0007669"/>
    <property type="project" value="UniProtKB-SubCell"/>
</dbReference>
<dbReference type="GO" id="GO:0009523">
    <property type="term" value="C:photosystem II"/>
    <property type="evidence" value="ECO:0007669"/>
    <property type="project" value="UniProtKB-KW"/>
</dbReference>
<dbReference type="GO" id="GO:0019684">
    <property type="term" value="P:photosynthesis, light reaction"/>
    <property type="evidence" value="ECO:0007669"/>
    <property type="project" value="InterPro"/>
</dbReference>
<dbReference type="HAMAP" id="MF_00438">
    <property type="entry name" value="PSII_PsbM"/>
    <property type="match status" value="1"/>
</dbReference>
<dbReference type="InterPro" id="IPR007826">
    <property type="entry name" value="PSII_PsbM"/>
</dbReference>
<dbReference type="InterPro" id="IPR037269">
    <property type="entry name" value="PSII_PsbM_sf"/>
</dbReference>
<dbReference type="NCBIfam" id="TIGR03038">
    <property type="entry name" value="PS_II_psbM"/>
    <property type="match status" value="1"/>
</dbReference>
<dbReference type="PANTHER" id="PTHR35774">
    <property type="entry name" value="PHOTOSYSTEM II REACTION CENTER PROTEIN M"/>
    <property type="match status" value="1"/>
</dbReference>
<dbReference type="PANTHER" id="PTHR35774:SF1">
    <property type="entry name" value="PHOTOSYSTEM II REACTION CENTER PROTEIN M"/>
    <property type="match status" value="1"/>
</dbReference>
<dbReference type="Pfam" id="PF05151">
    <property type="entry name" value="PsbM"/>
    <property type="match status" value="1"/>
</dbReference>
<dbReference type="SUPFAM" id="SSF161033">
    <property type="entry name" value="Photosystem II reaction center protein M, PsbM"/>
    <property type="match status" value="1"/>
</dbReference>
<organism>
    <name type="scientific">Lemna minor</name>
    <name type="common">Common duckweed</name>
    <dbReference type="NCBI Taxonomy" id="4472"/>
    <lineage>
        <taxon>Eukaryota</taxon>
        <taxon>Viridiplantae</taxon>
        <taxon>Streptophyta</taxon>
        <taxon>Embryophyta</taxon>
        <taxon>Tracheophyta</taxon>
        <taxon>Spermatophyta</taxon>
        <taxon>Magnoliopsida</taxon>
        <taxon>Liliopsida</taxon>
        <taxon>Araceae</taxon>
        <taxon>Lemnoideae</taxon>
        <taxon>Lemna</taxon>
    </lineage>
</organism>
<accession>A9L990</accession>
<keyword id="KW-0150">Chloroplast</keyword>
<keyword id="KW-0472">Membrane</keyword>
<keyword id="KW-0602">Photosynthesis</keyword>
<keyword id="KW-0604">Photosystem II</keyword>
<keyword id="KW-0934">Plastid</keyword>
<keyword id="KW-0674">Reaction center</keyword>
<keyword id="KW-0793">Thylakoid</keyword>
<keyword id="KW-0812">Transmembrane</keyword>
<keyword id="KW-1133">Transmembrane helix</keyword>
<reference key="1">
    <citation type="journal article" date="2008" name="J. Mol. Evol.">
        <title>Complete sequence of the Duckweed (Lemna minor) chloroplast genome: structural organization and phylogenetic relationships to other angiosperms.</title>
        <authorList>
            <person name="Mardanov A.V."/>
            <person name="Ravin N.V."/>
            <person name="Kuznetsov B.B."/>
            <person name="Samigullin T.H."/>
            <person name="Antonov A.S."/>
            <person name="Kolganova T.V."/>
            <person name="Skyabin K.G."/>
        </authorList>
    </citation>
    <scope>NUCLEOTIDE SEQUENCE [LARGE SCALE GENOMIC DNA]</scope>
</reference>
<comment type="function">
    <text evidence="1">One of the components of the core complex of photosystem II (PSII). PSII is a light-driven water:plastoquinone oxidoreductase that uses light energy to abstract electrons from H(2)O, generating O(2) and a proton gradient subsequently used for ATP formation. It consists of a core antenna complex that captures photons, and an electron transfer chain that converts photonic excitation into a charge separation. This subunit is found at the monomer-monomer interface.</text>
</comment>
<comment type="subunit">
    <text evidence="1">PSII is composed of 1 copy each of membrane proteins PsbA, PsbB, PsbC, PsbD, PsbE, PsbF, PsbH, PsbI, PsbJ, PsbK, PsbL, PsbM, PsbT, PsbX, PsbY, PsbZ, Psb30/Ycf12, at least 3 peripheral proteins of the oxygen-evolving complex and a large number of cofactors. It forms dimeric complexes.</text>
</comment>
<comment type="subcellular location">
    <subcellularLocation>
        <location evidence="1">Plastid</location>
        <location evidence="1">Chloroplast thylakoid membrane</location>
        <topology evidence="1">Single-pass membrane protein</topology>
    </subcellularLocation>
</comment>
<comment type="similarity">
    <text evidence="1">Belongs to the PsbM family.</text>
</comment>
<feature type="chain" id="PRO_0000325738" description="Photosystem II reaction center protein M">
    <location>
        <begin position="1"/>
        <end position="34"/>
    </location>
</feature>
<feature type="transmembrane region" description="Helical" evidence="1">
    <location>
        <begin position="5"/>
        <end position="25"/>
    </location>
</feature>
<geneLocation type="chloroplast"/>
<proteinExistence type="inferred from homology"/>
<gene>
    <name evidence="1" type="primary">psbM</name>
</gene>
<sequence>MEVNILAFIATALFILVPTAFLLIIYVKTVSQND</sequence>